<comment type="function">
    <molecule>Helper component proteinase</molecule>
    <text evidence="2">Required for aphid transmission and also has proteolytic activity. Only cleaves a Gly-Gly dipeptide at its own C-terminus. Interacts with virions and aphid stylets. Acts as a suppressor of RNA-mediated gene silencing, also known as post-transcriptional gene silencing (PTGS), a mechanism of plant viral defense that limits the accumulation of viral RNAs. May have RNA-binding activity.</text>
</comment>
<comment type="function">
    <molecule>Movement protein P3N-PIPO</molecule>
    <text evidence="3">Allows efficient cell to cell propagation, by bypassing the host cell wall barrier. Transports viral genome to neighboring plant cells directly through plasmosdesmata, without any budding.</text>
</comment>
<comment type="catalytic activity">
    <molecule>Helper component proteinase</molecule>
    <reaction>
        <text>Hydrolyzes a Gly-|-Gly bond at its own C-terminus, commonly in the sequence -Tyr-Xaa-Val-Gly-|-Gly, in the processing of the potyviral polyprotein.</text>
        <dbReference type="EC" id="3.4.22.45"/>
    </reaction>
</comment>
<comment type="subunit">
    <molecule>Movement protein P3N-PIPO</molecule>
    <text evidence="3">Interacts (via PIPO domain) with host PCaP1 protein; this interaction may help to anchor the movement complex to the plasma membrane from which the complex could move to the plasmodesmata.</text>
</comment>
<comment type="subcellular location">
    <molecule>Movement protein P3N-PIPO</molecule>
    <subcellularLocation>
        <location evidence="3">Host cell junction</location>
        <location evidence="3">Host plasmodesma</location>
    </subcellularLocation>
</comment>
<comment type="alternative products">
    <event type="ribosomal frameshifting"/>
    <isoform>
        <id>P0CK15-1</id>
        <name>P3N-PIPO polyprotein</name>
        <sequence type="displayed"/>
    </isoform>
    <isoform>
        <id>O36979-1</id>
        <name>Genome polyprotein</name>
        <sequence type="external"/>
    </isoform>
</comment>
<comment type="domain">
    <text evidence="1">The N-terminus of helper component proteinase is involved in interaction with stylets. The central part is involved in interaction with virions and the C-terminus is involved in cell-to cell movement of the virus (By similarity).</text>
</comment>
<comment type="PTM">
    <text evidence="1">Potyviral RNA is expressed as two polyproteins which undergo post-translational proteolytic processing. Genome polyprotein is processed by NIa-pro, P1 and HC-pro proteinases resulting in the production of at least ten individual proteins. P3N-PIPO is cleaved by P1 and HC-pro proteinases resulting in the production of three individual proteins. The P1 proteinase and the HC-pro cleave only their respective C-termini autocatalytically (By similarity).</text>
</comment>
<comment type="miscellaneous">
    <molecule>Isoform P3N-PIPO polyprotein</molecule>
    <text>Produced by -1 ribosomal frameshifting in P3 ORF.</text>
</comment>
<comment type="similarity">
    <text evidence="7">Belongs to the potyviridae P3N-PIPO polyprotein family.</text>
</comment>
<reference key="1">
    <citation type="submission" date="2001-05" db="EMBL/GenBank/DDBJ databases">
        <authorList>
            <person name="Lee K.C."/>
            <person name="Wong S.M."/>
        </authorList>
    </citation>
    <scope>NUCLEOTIDE SEQUENCE [GENOMIC RNA]</scope>
</reference>
<dbReference type="EC" id="3.4.21.-"/>
<dbReference type="EC" id="3.4.22.45"/>
<dbReference type="EMBL" id="AF014811">
    <property type="status" value="NOT_ANNOTATED_CDS"/>
    <property type="molecule type" value="Genomic_RNA"/>
</dbReference>
<dbReference type="SMR" id="P0CK15"/>
<dbReference type="Proteomes" id="UP000008612">
    <property type="component" value="Genome"/>
</dbReference>
<dbReference type="GO" id="GO:0044219">
    <property type="term" value="C:host cell plasmodesma"/>
    <property type="evidence" value="ECO:0007669"/>
    <property type="project" value="UniProtKB-SubCell"/>
</dbReference>
<dbReference type="GO" id="GO:0004197">
    <property type="term" value="F:cysteine-type endopeptidase activity"/>
    <property type="evidence" value="ECO:0007669"/>
    <property type="project" value="InterPro"/>
</dbReference>
<dbReference type="GO" id="GO:0006508">
    <property type="term" value="P:proteolysis"/>
    <property type="evidence" value="ECO:0007669"/>
    <property type="project" value="UniProtKB-KW"/>
</dbReference>
<dbReference type="GO" id="GO:0052170">
    <property type="term" value="P:symbiont-mediated suppression of host innate immune response"/>
    <property type="evidence" value="ECO:0007669"/>
    <property type="project" value="UniProtKB-KW"/>
</dbReference>
<dbReference type="GO" id="GO:0046740">
    <property type="term" value="P:transport of virus in host, cell to cell"/>
    <property type="evidence" value="ECO:0007669"/>
    <property type="project" value="UniProtKB-KW"/>
</dbReference>
<dbReference type="GO" id="GO:0075523">
    <property type="term" value="P:viral translational frameshifting"/>
    <property type="evidence" value="ECO:0007669"/>
    <property type="project" value="UniProtKB-KW"/>
</dbReference>
<dbReference type="Gene3D" id="3.90.70.150">
    <property type="entry name" value="Helper component proteinase"/>
    <property type="match status" value="1"/>
</dbReference>
<dbReference type="InterPro" id="IPR001456">
    <property type="entry name" value="HC-pro"/>
</dbReference>
<dbReference type="InterPro" id="IPR031159">
    <property type="entry name" value="HC_PRO_CPD_dom"/>
</dbReference>
<dbReference type="InterPro" id="IPR042308">
    <property type="entry name" value="HC_PRO_CPD_sf"/>
</dbReference>
<dbReference type="InterPro" id="IPR002540">
    <property type="entry name" value="Pept_S30_P1_potyvir"/>
</dbReference>
<dbReference type="InterPro" id="IPR039560">
    <property type="entry name" value="Potyvirid-P3"/>
</dbReference>
<dbReference type="Pfam" id="PF00851">
    <property type="entry name" value="Peptidase_C6"/>
    <property type="match status" value="1"/>
</dbReference>
<dbReference type="Pfam" id="PF01577">
    <property type="entry name" value="Peptidase_S30"/>
    <property type="match status" value="1"/>
</dbReference>
<dbReference type="Pfam" id="PF13608">
    <property type="entry name" value="Potyvirid-P3"/>
    <property type="match status" value="1"/>
</dbReference>
<dbReference type="PROSITE" id="PS51744">
    <property type="entry name" value="HC_PRO_CPD"/>
    <property type="match status" value="1"/>
</dbReference>
<dbReference type="PROSITE" id="PS51871">
    <property type="entry name" value="PV_P1_PRO"/>
    <property type="match status" value="1"/>
</dbReference>
<proteinExistence type="inferred from homology"/>
<evidence type="ECO:0000250" key="1"/>
<evidence type="ECO:0000250" key="2">
    <source>
        <dbReference type="UniProtKB" id="P04517"/>
    </source>
</evidence>
<evidence type="ECO:0000250" key="3">
    <source>
        <dbReference type="UniProtKB" id="P0CK11"/>
    </source>
</evidence>
<evidence type="ECO:0000255" key="4"/>
<evidence type="ECO:0000255" key="5">
    <source>
        <dbReference type="PROSITE-ProRule" id="PRU01080"/>
    </source>
</evidence>
<evidence type="ECO:0000255" key="6">
    <source>
        <dbReference type="PROSITE-ProRule" id="PRU01219"/>
    </source>
</evidence>
<evidence type="ECO:0000305" key="7"/>
<feature type="chain" id="PRO_0000420107" description="P3N-PIPO polyprotein">
    <location>
        <begin position="1"/>
        <end position="997"/>
    </location>
</feature>
<feature type="chain" id="PRO_0000420108" description="P1 protease" evidence="4">
    <location>
        <begin position="1"/>
        <end position="313"/>
    </location>
</feature>
<feature type="chain" id="PRO_0000420109" description="Helper component proteinase" evidence="4">
    <location>
        <begin position="314"/>
        <end position="769"/>
    </location>
</feature>
<feature type="chain" id="PRO_0000408558" description="Movement protein P3N-PIPO">
    <location>
        <begin position="770"/>
        <end position="997"/>
    </location>
</feature>
<feature type="domain" description="Peptidase S30" evidence="6">
    <location>
        <begin position="173"/>
        <end position="313"/>
    </location>
</feature>
<feature type="domain" description="Peptidase C6" evidence="5">
    <location>
        <begin position="647"/>
        <end position="769"/>
    </location>
</feature>
<feature type="short sequence motif" description="Involved in interaction with stylet and aphid transmission" evidence="1">
    <location>
        <begin position="365"/>
        <end position="368"/>
    </location>
</feature>
<feature type="short sequence motif" description="Involved in virions binding and aphid transmission" evidence="1">
    <location>
        <begin position="621"/>
        <end position="623"/>
    </location>
</feature>
<feature type="active site" description="For P1 proteinase activity" evidence="4">
    <location>
        <position position="235"/>
    </location>
</feature>
<feature type="active site" description="For P1 proteinase activity" evidence="1">
    <location>
        <position position="267"/>
    </location>
</feature>
<feature type="active site" description="For helper component proteinase activity" evidence="5">
    <location>
        <position position="655"/>
    </location>
</feature>
<feature type="active site" description="For helper component proteinase activity" evidence="5">
    <location>
        <position position="728"/>
    </location>
</feature>
<feature type="site" description="Cleavage; by P1 proteinase" evidence="4">
    <location>
        <begin position="313"/>
        <end position="314"/>
    </location>
</feature>
<feature type="site" description="Cleavage; by autolysis" evidence="5">
    <location>
        <begin position="769"/>
        <end position="770"/>
    </location>
</feature>
<sequence>MAAIMIGSISVPIIGSAQCATAPIGNRVNIVAPGHMAICKPQMRSHAYYKHASQKLSEQSSRGIEVLNSFFNNDPEDAFRLTRNGMSKVKKGPNGRIILRKPKARHVFERINLEKSEKEQKGKFFNGEYDTTVTSIKGVTTSKENDLGAFSLRSPFYKRTCKKEKRRITRENIVCVDDVNNLCERILKITRDKNIPVEIIGKRRNHHTLTFKKFKGSFVGKVSLAPERSQMKHVEMSYGQFDYILQAICRITSTKHVRDEDIKPGCSGWVFSTDHALTQKYSRLPYLVIRGRDDDGIVNALEPVLFYSDVEHYSFQNEVQFFNGWRKMFDKLKPHSDHTCKVDHNNEECGEMAAVLSQAIFPVLKLSCQVCREKLSRVSFEEFKDFLSRNFMTHESEWSTLRDGVHCDNVLKLIKGAVQTTQNLKLSSDIMKLVQNHTSTHMKQIQDINKALMKGSLVTQDELDLALKQLLEMTQWFKNHMHLTGEEALKTFRNKRSNKAMINPSLLCDNQLDKNGNFIWGERGYHSKRLFKNFFEEVIPSEGYTKYIVRNFPNGTRKLAIGSLIVPLNLDRARTALLGESIEKEPLTSACISQQNENYIHSCCCVTMDDGTPMYSELKSPTKRHLVIGASGDPKYIDLPASEAERMYIAKEGYCYLNIFLAMLVNVNENEAKDFTKMIRDVLIPMLGQWPSLMDVATAAYILGVFHPETRCAELPRILVDHATQTMHVIDSYGSLTVGYHVLKAGTVNHLIQFASNDLQSEMKHYRVGGTPTQRIRLEEQLIKGIFKPKIMMQLLHDDPYILLLGMISPTILVHMYRMRHFERGIEIWIKRDHEIGKIFVILEQLTRKVALAEILVDQLDLISEASPHLLEIMNGCQDNQRAYAPALDLLTIQVEREFSNKELKTNGYPDLHQTLHDMREKNVCEAVTQFMARAKLAGKILCNRAIEAILDFYGKKFDPASKRKKARIFATICSRVLYHDPSTCEEHSRCRRAQTK</sequence>
<organismHost>
    <name type="scientific">Citrullus lanatus</name>
    <name type="common">Watermelon</name>
    <name type="synonym">Citrullus vulgaris</name>
    <dbReference type="NCBI Taxonomy" id="3654"/>
</organismHost>
<organismHost>
    <name type="scientific">Cucumis melo</name>
    <name type="common">Muskmelon</name>
    <dbReference type="NCBI Taxonomy" id="3656"/>
</organismHost>
<organismHost>
    <name type="scientific">Cucumis sativus</name>
    <name type="common">Cucumber</name>
    <dbReference type="NCBI Taxonomy" id="3659"/>
</organismHost>
<organismHost>
    <name type="scientific">Cucurbita pepo</name>
    <name type="common">Vegetable marrow</name>
    <name type="synonym">Summer squash</name>
    <dbReference type="NCBI Taxonomy" id="3663"/>
</organismHost>
<protein>
    <recommendedName>
        <fullName>P3N-PIPO polyprotein</fullName>
    </recommendedName>
    <component>
        <recommendedName>
            <fullName>P1 protease</fullName>
            <ecNumber>3.4.21.-</ecNumber>
        </recommendedName>
        <alternativeName>
            <fullName>N-terminal protein</fullName>
        </alternativeName>
        <alternativeName>
            <fullName>P1 proteinase</fullName>
        </alternativeName>
    </component>
    <component>
        <recommendedName>
            <fullName>Helper component proteinase</fullName>
            <shortName>HC-pro</shortName>
            <ecNumber>3.4.22.45</ecNumber>
        </recommendedName>
    </component>
    <component>
        <recommendedName>
            <fullName>Movement protein P3N-PIPO</fullName>
        </recommendedName>
        <alternativeName>
            <fullName>Pretty interesting potyviridae ORF</fullName>
            <shortName>PIPO</shortName>
        </alternativeName>
    </component>
</protein>
<name>MVP_ZYMVS</name>
<accession>P0CK15</accession>
<organism>
    <name type="scientific">Zucchini yellow mosaic virus (strain Singapore)</name>
    <name type="common">ZYMV</name>
    <dbReference type="NCBI Taxonomy" id="117130"/>
    <lineage>
        <taxon>Viruses</taxon>
        <taxon>Riboviria</taxon>
        <taxon>Orthornavirae</taxon>
        <taxon>Pisuviricota</taxon>
        <taxon>Stelpaviricetes</taxon>
        <taxon>Patatavirales</taxon>
        <taxon>Potyviridae</taxon>
        <taxon>Potyvirus</taxon>
        <taxon>Potyvirus cucurbitaflavitesselati</taxon>
        <taxon>Zucchini yellow mosaic virus</taxon>
    </lineage>
</organism>
<keyword id="KW-1031">Host cell junction</keyword>
<keyword id="KW-0945">Host-virus interaction</keyword>
<keyword id="KW-0378">Hydrolase</keyword>
<keyword id="KW-1090">Inhibition of host innate immune response by virus</keyword>
<keyword id="KW-0645">Protease</keyword>
<keyword id="KW-0688">Ribosomal frameshifting</keyword>
<keyword id="KW-0941">Suppressor of RNA silencing</keyword>
<keyword id="KW-0813">Transport</keyword>
<keyword id="KW-0899">Viral immunoevasion</keyword>
<keyword id="KW-0916">Viral movement protein</keyword>